<dbReference type="EMBL" id="AM406670">
    <property type="protein sequence ID" value="CAL93016.1"/>
    <property type="molecule type" value="Genomic_DNA"/>
</dbReference>
<dbReference type="RefSeq" id="WP_011764134.1">
    <property type="nucleotide sequence ID" value="NC_008702.1"/>
</dbReference>
<dbReference type="SMR" id="A1K2G1"/>
<dbReference type="STRING" id="62928.azo0399"/>
<dbReference type="KEGG" id="azo:azo0399"/>
<dbReference type="eggNOG" id="COG1660">
    <property type="taxonomic scope" value="Bacteria"/>
</dbReference>
<dbReference type="HOGENOM" id="CLU_059558_1_1_4"/>
<dbReference type="Proteomes" id="UP000002588">
    <property type="component" value="Chromosome"/>
</dbReference>
<dbReference type="GO" id="GO:0005524">
    <property type="term" value="F:ATP binding"/>
    <property type="evidence" value="ECO:0007669"/>
    <property type="project" value="UniProtKB-UniRule"/>
</dbReference>
<dbReference type="GO" id="GO:0005525">
    <property type="term" value="F:GTP binding"/>
    <property type="evidence" value="ECO:0007669"/>
    <property type="project" value="UniProtKB-UniRule"/>
</dbReference>
<dbReference type="HAMAP" id="MF_00636">
    <property type="entry name" value="RapZ_like"/>
    <property type="match status" value="1"/>
</dbReference>
<dbReference type="InterPro" id="IPR027417">
    <property type="entry name" value="P-loop_NTPase"/>
</dbReference>
<dbReference type="InterPro" id="IPR005337">
    <property type="entry name" value="RapZ-like"/>
</dbReference>
<dbReference type="InterPro" id="IPR053930">
    <property type="entry name" value="RapZ-like_N"/>
</dbReference>
<dbReference type="InterPro" id="IPR053931">
    <property type="entry name" value="RapZ_C"/>
</dbReference>
<dbReference type="NCBIfam" id="NF003828">
    <property type="entry name" value="PRK05416.1"/>
    <property type="match status" value="1"/>
</dbReference>
<dbReference type="PANTHER" id="PTHR30448">
    <property type="entry name" value="RNASE ADAPTER PROTEIN RAPZ"/>
    <property type="match status" value="1"/>
</dbReference>
<dbReference type="PANTHER" id="PTHR30448:SF0">
    <property type="entry name" value="RNASE ADAPTER PROTEIN RAPZ"/>
    <property type="match status" value="1"/>
</dbReference>
<dbReference type="Pfam" id="PF22740">
    <property type="entry name" value="PapZ_C"/>
    <property type="match status" value="1"/>
</dbReference>
<dbReference type="Pfam" id="PF03668">
    <property type="entry name" value="RapZ-like_N"/>
    <property type="match status" value="1"/>
</dbReference>
<dbReference type="PIRSF" id="PIRSF005052">
    <property type="entry name" value="P-loopkin"/>
    <property type="match status" value="1"/>
</dbReference>
<dbReference type="SUPFAM" id="SSF52540">
    <property type="entry name" value="P-loop containing nucleoside triphosphate hydrolases"/>
    <property type="match status" value="1"/>
</dbReference>
<sequence>MQIVLISGLSGSGKSIALHVLEDAGYYVVDNLPSALLLQLVLHLRGAGYQRVAVAVDMRSGSSIAALPEQVESLRGMVDDLRFIFLEARDDTLIARFSETRRRHPLADENVSLDEAIQRERDALASVAELGHRMDTSDIHANTLRAWIKDFIGAAASEGLTLMFQSFGFKYGIPLDADLVFDVRCLPNPYYDPLLRPLTGRDQGVIDYLEKVPEVGRMAEDIRRFVADWLPAYMRDNRSYLTVAIGCTGGQHRSVYMAEWLARRFADRVRVIVRHRSAARRVQDAPPAVSGK</sequence>
<reference key="1">
    <citation type="journal article" date="2006" name="Nat. Biotechnol.">
        <title>Complete genome of the mutualistic, N2-fixing grass endophyte Azoarcus sp. strain BH72.</title>
        <authorList>
            <person name="Krause A."/>
            <person name="Ramakumar A."/>
            <person name="Bartels D."/>
            <person name="Battistoni F."/>
            <person name="Bekel T."/>
            <person name="Boch J."/>
            <person name="Boehm M."/>
            <person name="Friedrich F."/>
            <person name="Hurek T."/>
            <person name="Krause L."/>
            <person name="Linke B."/>
            <person name="McHardy A.C."/>
            <person name="Sarkar A."/>
            <person name="Schneiker S."/>
            <person name="Syed A.A."/>
            <person name="Thauer R."/>
            <person name="Vorhoelter F.-J."/>
            <person name="Weidner S."/>
            <person name="Puehler A."/>
            <person name="Reinhold-Hurek B."/>
            <person name="Kaiser O."/>
            <person name="Goesmann A."/>
        </authorList>
    </citation>
    <scope>NUCLEOTIDE SEQUENCE [LARGE SCALE GENOMIC DNA]</scope>
    <source>
        <strain>BH72</strain>
    </source>
</reference>
<organism>
    <name type="scientific">Azoarcus sp. (strain BH72)</name>
    <dbReference type="NCBI Taxonomy" id="418699"/>
    <lineage>
        <taxon>Bacteria</taxon>
        <taxon>Pseudomonadati</taxon>
        <taxon>Pseudomonadota</taxon>
        <taxon>Betaproteobacteria</taxon>
        <taxon>Rhodocyclales</taxon>
        <taxon>Zoogloeaceae</taxon>
        <taxon>Azoarcus</taxon>
    </lineage>
</organism>
<name>Y399_AZOSB</name>
<gene>
    <name type="ordered locus">azo0399</name>
</gene>
<feature type="chain" id="PRO_1000056805" description="Nucleotide-binding protein azo0399">
    <location>
        <begin position="1"/>
        <end position="292"/>
    </location>
</feature>
<feature type="binding site" evidence="1">
    <location>
        <begin position="8"/>
        <end position="15"/>
    </location>
    <ligand>
        <name>ATP</name>
        <dbReference type="ChEBI" id="CHEBI:30616"/>
    </ligand>
</feature>
<feature type="binding site" evidence="1">
    <location>
        <begin position="57"/>
        <end position="60"/>
    </location>
    <ligand>
        <name>GTP</name>
        <dbReference type="ChEBI" id="CHEBI:37565"/>
    </ligand>
</feature>
<evidence type="ECO:0000255" key="1">
    <source>
        <dbReference type="HAMAP-Rule" id="MF_00636"/>
    </source>
</evidence>
<comment type="function">
    <text evidence="1">Displays ATPase and GTPase activities.</text>
</comment>
<comment type="similarity">
    <text evidence="1">Belongs to the RapZ-like family.</text>
</comment>
<accession>A1K2G1</accession>
<proteinExistence type="inferred from homology"/>
<keyword id="KW-0067">ATP-binding</keyword>
<keyword id="KW-0342">GTP-binding</keyword>
<keyword id="KW-0547">Nucleotide-binding</keyword>
<keyword id="KW-1185">Reference proteome</keyword>
<protein>
    <recommendedName>
        <fullName evidence="1">Nucleotide-binding protein azo0399</fullName>
    </recommendedName>
</protein>